<sequence>MNLHEYQAKQLFARYGLPAPVGYACTTPREAEEAASKIGAGPWVVKCQVHAGGRGKAGGVKVVKSKEEIRAFAENWLGKRLVTYQTDANGQPVNQILVEAATDIGKELYLGAVVDRSSRRVVFMASTEGGVEIEKVAEETPHLIHKVALDPLTGPMPYQGRELAFKLGLEGKLVQQFTKIFMGLATIFLERDLALIEINPLVITKQGDLICLDGKLGADGNALFRQPDLREMRDQSQEDPREAQAAQWELNYVALDGNIGCMVNGAGLAMGTMDIVKLHGGEPANFLDVGGGATKERVTEAFKIILSDDNVKAVLVNIFGGIVRCDLIADGIIGAVEEVGVNVPVVVRLEGNNAELGAKKLADSGLNIIAAKSLTDAAQQVVAAVEGK</sequence>
<name>SUCC_SALTY</name>
<reference key="1">
    <citation type="journal article" date="2001" name="Nature">
        <title>Complete genome sequence of Salmonella enterica serovar Typhimurium LT2.</title>
        <authorList>
            <person name="McClelland M."/>
            <person name="Sanderson K.E."/>
            <person name="Spieth J."/>
            <person name="Clifton S.W."/>
            <person name="Latreille P."/>
            <person name="Courtney L."/>
            <person name="Porwollik S."/>
            <person name="Ali J."/>
            <person name="Dante M."/>
            <person name="Du F."/>
            <person name="Hou S."/>
            <person name="Layman D."/>
            <person name="Leonard S."/>
            <person name="Nguyen C."/>
            <person name="Scott K."/>
            <person name="Holmes A."/>
            <person name="Grewal N."/>
            <person name="Mulvaney E."/>
            <person name="Ryan E."/>
            <person name="Sun H."/>
            <person name="Florea L."/>
            <person name="Miller W."/>
            <person name="Stoneking T."/>
            <person name="Nhan M."/>
            <person name="Waterston R."/>
            <person name="Wilson R.K."/>
        </authorList>
    </citation>
    <scope>NUCLEOTIDE SEQUENCE [LARGE SCALE GENOMIC DNA]</scope>
    <source>
        <strain>LT2 / SGSC1412 / ATCC 700720</strain>
    </source>
</reference>
<protein>
    <recommendedName>
        <fullName evidence="1">Succinate--CoA ligase [ADP-forming] subunit beta</fullName>
        <ecNumber evidence="1">6.2.1.5</ecNumber>
    </recommendedName>
    <alternativeName>
        <fullName evidence="1">Succinyl-CoA synthetase subunit beta</fullName>
        <shortName evidence="1">SCS-beta</shortName>
    </alternativeName>
</protein>
<keyword id="KW-0067">ATP-binding</keyword>
<keyword id="KW-0436">Ligase</keyword>
<keyword id="KW-0460">Magnesium</keyword>
<keyword id="KW-0479">Metal-binding</keyword>
<keyword id="KW-0547">Nucleotide-binding</keyword>
<keyword id="KW-1185">Reference proteome</keyword>
<keyword id="KW-0816">Tricarboxylic acid cycle</keyword>
<organism>
    <name type="scientific">Salmonella typhimurium (strain LT2 / SGSC1412 / ATCC 700720)</name>
    <dbReference type="NCBI Taxonomy" id="99287"/>
    <lineage>
        <taxon>Bacteria</taxon>
        <taxon>Pseudomonadati</taxon>
        <taxon>Pseudomonadota</taxon>
        <taxon>Gammaproteobacteria</taxon>
        <taxon>Enterobacterales</taxon>
        <taxon>Enterobacteriaceae</taxon>
        <taxon>Salmonella</taxon>
    </lineage>
</organism>
<evidence type="ECO:0000255" key="1">
    <source>
        <dbReference type="HAMAP-Rule" id="MF_00558"/>
    </source>
</evidence>
<comment type="function">
    <text evidence="1">Succinyl-CoA synthetase functions in the citric acid cycle (TCA), coupling the hydrolysis of succinyl-CoA to the synthesis of either ATP or GTP and thus represents the only step of substrate-level phosphorylation in the TCA. The beta subunit provides nucleotide specificity of the enzyme and binds the substrate succinate, while the binding sites for coenzyme A and phosphate are found in the alpha subunit.</text>
</comment>
<comment type="catalytic activity">
    <reaction evidence="1">
        <text>succinate + ATP + CoA = succinyl-CoA + ADP + phosphate</text>
        <dbReference type="Rhea" id="RHEA:17661"/>
        <dbReference type="ChEBI" id="CHEBI:30031"/>
        <dbReference type="ChEBI" id="CHEBI:30616"/>
        <dbReference type="ChEBI" id="CHEBI:43474"/>
        <dbReference type="ChEBI" id="CHEBI:57287"/>
        <dbReference type="ChEBI" id="CHEBI:57292"/>
        <dbReference type="ChEBI" id="CHEBI:456216"/>
        <dbReference type="EC" id="6.2.1.5"/>
    </reaction>
    <physiologicalReaction direction="right-to-left" evidence="1">
        <dbReference type="Rhea" id="RHEA:17663"/>
    </physiologicalReaction>
</comment>
<comment type="catalytic activity">
    <reaction evidence="1">
        <text>GTP + succinate + CoA = succinyl-CoA + GDP + phosphate</text>
        <dbReference type="Rhea" id="RHEA:22120"/>
        <dbReference type="ChEBI" id="CHEBI:30031"/>
        <dbReference type="ChEBI" id="CHEBI:37565"/>
        <dbReference type="ChEBI" id="CHEBI:43474"/>
        <dbReference type="ChEBI" id="CHEBI:57287"/>
        <dbReference type="ChEBI" id="CHEBI:57292"/>
        <dbReference type="ChEBI" id="CHEBI:58189"/>
    </reaction>
    <physiologicalReaction direction="right-to-left" evidence="1">
        <dbReference type="Rhea" id="RHEA:22122"/>
    </physiologicalReaction>
</comment>
<comment type="cofactor">
    <cofactor evidence="1">
        <name>Mg(2+)</name>
        <dbReference type="ChEBI" id="CHEBI:18420"/>
    </cofactor>
    <text evidence="1">Binds 1 Mg(2+) ion per subunit.</text>
</comment>
<comment type="pathway">
    <text evidence="1">Carbohydrate metabolism; tricarboxylic acid cycle; succinate from succinyl-CoA (ligase route): step 1/1.</text>
</comment>
<comment type="subunit">
    <text evidence="1">Heterotetramer of two alpha and two beta subunits.</text>
</comment>
<comment type="similarity">
    <text evidence="1">Belongs to the succinate/malate CoA ligase beta subunit family.</text>
</comment>
<proteinExistence type="inferred from homology"/>
<gene>
    <name evidence="1" type="primary">sucC</name>
    <name type="ordered locus">STM0738</name>
</gene>
<accession>P66869</accession>
<accession>Q8XEP0</accession>
<feature type="chain" id="PRO_0000102856" description="Succinate--CoA ligase [ADP-forming] subunit beta">
    <location>
        <begin position="1"/>
        <end position="388"/>
    </location>
</feature>
<feature type="domain" description="ATP-grasp" evidence="1">
    <location>
        <begin position="9"/>
        <end position="244"/>
    </location>
</feature>
<feature type="binding site" evidence="1">
    <location>
        <position position="46"/>
    </location>
    <ligand>
        <name>ATP</name>
        <dbReference type="ChEBI" id="CHEBI:30616"/>
    </ligand>
</feature>
<feature type="binding site" evidence="1">
    <location>
        <begin position="53"/>
        <end position="55"/>
    </location>
    <ligand>
        <name>ATP</name>
        <dbReference type="ChEBI" id="CHEBI:30616"/>
    </ligand>
</feature>
<feature type="binding site" evidence="1">
    <location>
        <position position="99"/>
    </location>
    <ligand>
        <name>ATP</name>
        <dbReference type="ChEBI" id="CHEBI:30616"/>
    </ligand>
</feature>
<feature type="binding site" evidence="1">
    <location>
        <position position="102"/>
    </location>
    <ligand>
        <name>ATP</name>
        <dbReference type="ChEBI" id="CHEBI:30616"/>
    </ligand>
</feature>
<feature type="binding site" evidence="1">
    <location>
        <position position="107"/>
    </location>
    <ligand>
        <name>ATP</name>
        <dbReference type="ChEBI" id="CHEBI:30616"/>
    </ligand>
</feature>
<feature type="binding site" evidence="1">
    <location>
        <position position="199"/>
    </location>
    <ligand>
        <name>Mg(2+)</name>
        <dbReference type="ChEBI" id="CHEBI:18420"/>
    </ligand>
</feature>
<feature type="binding site" evidence="1">
    <location>
        <position position="213"/>
    </location>
    <ligand>
        <name>Mg(2+)</name>
        <dbReference type="ChEBI" id="CHEBI:18420"/>
    </ligand>
</feature>
<feature type="binding site" evidence="1">
    <location>
        <position position="264"/>
    </location>
    <ligand>
        <name>substrate</name>
        <note>ligand shared with subunit alpha</note>
    </ligand>
</feature>
<feature type="binding site" evidence="1">
    <location>
        <begin position="321"/>
        <end position="323"/>
    </location>
    <ligand>
        <name>substrate</name>
        <note>ligand shared with subunit alpha</note>
    </ligand>
</feature>
<dbReference type="EC" id="6.2.1.5" evidence="1"/>
<dbReference type="EMBL" id="AE006468">
    <property type="protein sequence ID" value="AAL19682.1"/>
    <property type="molecule type" value="Genomic_DNA"/>
</dbReference>
<dbReference type="RefSeq" id="NP_459723.1">
    <property type="nucleotide sequence ID" value="NC_003197.2"/>
</dbReference>
<dbReference type="RefSeq" id="WP_001048590.1">
    <property type="nucleotide sequence ID" value="NC_003197.2"/>
</dbReference>
<dbReference type="SMR" id="P66869"/>
<dbReference type="STRING" id="99287.STM0738"/>
<dbReference type="PaxDb" id="99287-STM0738"/>
<dbReference type="GeneID" id="1252258"/>
<dbReference type="KEGG" id="stm:STM0738"/>
<dbReference type="PATRIC" id="fig|99287.12.peg.770"/>
<dbReference type="HOGENOM" id="CLU_037430_4_0_6"/>
<dbReference type="OMA" id="ITACDEV"/>
<dbReference type="PhylomeDB" id="P66869"/>
<dbReference type="BioCyc" id="SENT99287:STM0738-MONOMER"/>
<dbReference type="UniPathway" id="UPA00223">
    <property type="reaction ID" value="UER00999"/>
</dbReference>
<dbReference type="Proteomes" id="UP000001014">
    <property type="component" value="Chromosome"/>
</dbReference>
<dbReference type="GO" id="GO:0005829">
    <property type="term" value="C:cytosol"/>
    <property type="evidence" value="ECO:0000318"/>
    <property type="project" value="GO_Central"/>
</dbReference>
<dbReference type="GO" id="GO:0042709">
    <property type="term" value="C:succinate-CoA ligase complex"/>
    <property type="evidence" value="ECO:0000318"/>
    <property type="project" value="GO_Central"/>
</dbReference>
<dbReference type="GO" id="GO:0005524">
    <property type="term" value="F:ATP binding"/>
    <property type="evidence" value="ECO:0007669"/>
    <property type="project" value="UniProtKB-UniRule"/>
</dbReference>
<dbReference type="GO" id="GO:0000287">
    <property type="term" value="F:magnesium ion binding"/>
    <property type="evidence" value="ECO:0007669"/>
    <property type="project" value="UniProtKB-UniRule"/>
</dbReference>
<dbReference type="GO" id="GO:0004775">
    <property type="term" value="F:succinate-CoA ligase (ADP-forming) activity"/>
    <property type="evidence" value="ECO:0000318"/>
    <property type="project" value="GO_Central"/>
</dbReference>
<dbReference type="GO" id="GO:0004776">
    <property type="term" value="F:succinate-CoA ligase (GDP-forming) activity"/>
    <property type="evidence" value="ECO:0007669"/>
    <property type="project" value="RHEA"/>
</dbReference>
<dbReference type="GO" id="GO:0006104">
    <property type="term" value="P:succinyl-CoA metabolic process"/>
    <property type="evidence" value="ECO:0000318"/>
    <property type="project" value="GO_Central"/>
</dbReference>
<dbReference type="GO" id="GO:0006099">
    <property type="term" value="P:tricarboxylic acid cycle"/>
    <property type="evidence" value="ECO:0000318"/>
    <property type="project" value="GO_Central"/>
</dbReference>
<dbReference type="FunFam" id="3.30.1490.20:FF:000002">
    <property type="entry name" value="Succinate--CoA ligase [ADP-forming] subunit beta"/>
    <property type="match status" value="1"/>
</dbReference>
<dbReference type="FunFam" id="3.30.470.20:FF:000002">
    <property type="entry name" value="Succinate--CoA ligase [ADP-forming] subunit beta"/>
    <property type="match status" value="1"/>
</dbReference>
<dbReference type="FunFam" id="3.40.50.261:FF:000001">
    <property type="entry name" value="Succinate--CoA ligase [ADP-forming] subunit beta"/>
    <property type="match status" value="1"/>
</dbReference>
<dbReference type="Gene3D" id="3.30.1490.20">
    <property type="entry name" value="ATP-grasp fold, A domain"/>
    <property type="match status" value="1"/>
</dbReference>
<dbReference type="Gene3D" id="3.30.470.20">
    <property type="entry name" value="ATP-grasp fold, B domain"/>
    <property type="match status" value="1"/>
</dbReference>
<dbReference type="Gene3D" id="3.40.50.261">
    <property type="entry name" value="Succinyl-CoA synthetase domains"/>
    <property type="match status" value="1"/>
</dbReference>
<dbReference type="HAMAP" id="MF_00558">
    <property type="entry name" value="Succ_CoA_beta"/>
    <property type="match status" value="1"/>
</dbReference>
<dbReference type="InterPro" id="IPR011761">
    <property type="entry name" value="ATP-grasp"/>
</dbReference>
<dbReference type="InterPro" id="IPR013650">
    <property type="entry name" value="ATP-grasp_succ-CoA_synth-type"/>
</dbReference>
<dbReference type="InterPro" id="IPR013815">
    <property type="entry name" value="ATP_grasp_subdomain_1"/>
</dbReference>
<dbReference type="InterPro" id="IPR017866">
    <property type="entry name" value="Succ-CoA_synthase_bsu_CS"/>
</dbReference>
<dbReference type="InterPro" id="IPR005811">
    <property type="entry name" value="SUCC_ACL_C"/>
</dbReference>
<dbReference type="InterPro" id="IPR005809">
    <property type="entry name" value="Succ_CoA_ligase-like_bsu"/>
</dbReference>
<dbReference type="InterPro" id="IPR016102">
    <property type="entry name" value="Succinyl-CoA_synth-like"/>
</dbReference>
<dbReference type="NCBIfam" id="NF001913">
    <property type="entry name" value="PRK00696.1"/>
    <property type="match status" value="1"/>
</dbReference>
<dbReference type="NCBIfam" id="TIGR01016">
    <property type="entry name" value="sucCoAbeta"/>
    <property type="match status" value="1"/>
</dbReference>
<dbReference type="PANTHER" id="PTHR11815:SF10">
    <property type="entry name" value="SUCCINATE--COA LIGASE [GDP-FORMING] SUBUNIT BETA, MITOCHONDRIAL"/>
    <property type="match status" value="1"/>
</dbReference>
<dbReference type="PANTHER" id="PTHR11815">
    <property type="entry name" value="SUCCINYL-COA SYNTHETASE BETA CHAIN"/>
    <property type="match status" value="1"/>
</dbReference>
<dbReference type="Pfam" id="PF08442">
    <property type="entry name" value="ATP-grasp_2"/>
    <property type="match status" value="1"/>
</dbReference>
<dbReference type="Pfam" id="PF00549">
    <property type="entry name" value="Ligase_CoA"/>
    <property type="match status" value="1"/>
</dbReference>
<dbReference type="PIRSF" id="PIRSF001554">
    <property type="entry name" value="SucCS_beta"/>
    <property type="match status" value="1"/>
</dbReference>
<dbReference type="SUPFAM" id="SSF56059">
    <property type="entry name" value="Glutathione synthetase ATP-binding domain-like"/>
    <property type="match status" value="1"/>
</dbReference>
<dbReference type="SUPFAM" id="SSF52210">
    <property type="entry name" value="Succinyl-CoA synthetase domains"/>
    <property type="match status" value="1"/>
</dbReference>
<dbReference type="PROSITE" id="PS50975">
    <property type="entry name" value="ATP_GRASP"/>
    <property type="match status" value="1"/>
</dbReference>
<dbReference type="PROSITE" id="PS01217">
    <property type="entry name" value="SUCCINYL_COA_LIG_3"/>
    <property type="match status" value="1"/>
</dbReference>